<gene>
    <name evidence="1" type="primary">mraY</name>
    <name type="ordered locus">Hac_0812</name>
</gene>
<name>MRAY_HELAH</name>
<evidence type="ECO:0000255" key="1">
    <source>
        <dbReference type="HAMAP-Rule" id="MF_00038"/>
    </source>
</evidence>
<organism>
    <name type="scientific">Helicobacter acinonychis (strain Sheeba)</name>
    <dbReference type="NCBI Taxonomy" id="382638"/>
    <lineage>
        <taxon>Bacteria</taxon>
        <taxon>Pseudomonadati</taxon>
        <taxon>Campylobacterota</taxon>
        <taxon>Epsilonproteobacteria</taxon>
        <taxon>Campylobacterales</taxon>
        <taxon>Helicobacteraceae</taxon>
        <taxon>Helicobacter</taxon>
    </lineage>
</organism>
<keyword id="KW-0131">Cell cycle</keyword>
<keyword id="KW-0132">Cell division</keyword>
<keyword id="KW-0997">Cell inner membrane</keyword>
<keyword id="KW-1003">Cell membrane</keyword>
<keyword id="KW-0133">Cell shape</keyword>
<keyword id="KW-0961">Cell wall biogenesis/degradation</keyword>
<keyword id="KW-0460">Magnesium</keyword>
<keyword id="KW-0472">Membrane</keyword>
<keyword id="KW-0479">Metal-binding</keyword>
<keyword id="KW-0573">Peptidoglycan synthesis</keyword>
<keyword id="KW-0808">Transferase</keyword>
<keyword id="KW-0812">Transmembrane</keyword>
<keyword id="KW-1133">Transmembrane helix</keyword>
<feature type="chain" id="PRO_1000002988" description="Phospho-N-acetylmuramoyl-pentapeptide-transferase">
    <location>
        <begin position="1"/>
        <end position="353"/>
    </location>
</feature>
<feature type="transmembrane region" description="Helical" evidence="1">
    <location>
        <begin position="24"/>
        <end position="44"/>
    </location>
</feature>
<feature type="transmembrane region" description="Helical" evidence="1">
    <location>
        <begin position="66"/>
        <end position="86"/>
    </location>
</feature>
<feature type="transmembrane region" description="Helical" evidence="1">
    <location>
        <begin position="88"/>
        <end position="108"/>
    </location>
</feature>
<feature type="transmembrane region" description="Helical" evidence="1">
    <location>
        <begin position="129"/>
        <end position="149"/>
    </location>
</feature>
<feature type="transmembrane region" description="Helical" evidence="1">
    <location>
        <begin position="160"/>
        <end position="180"/>
    </location>
</feature>
<feature type="transmembrane region" description="Helical" evidence="1">
    <location>
        <begin position="192"/>
        <end position="212"/>
    </location>
</feature>
<feature type="transmembrane region" description="Helical" evidence="1">
    <location>
        <begin position="229"/>
        <end position="249"/>
    </location>
</feature>
<feature type="transmembrane region" description="Helical" evidence="1">
    <location>
        <begin position="256"/>
        <end position="276"/>
    </location>
</feature>
<feature type="transmembrane region" description="Helical" evidence="1">
    <location>
        <begin position="281"/>
        <end position="301"/>
    </location>
</feature>
<feature type="transmembrane region" description="Helical" evidence="1">
    <location>
        <begin position="330"/>
        <end position="350"/>
    </location>
</feature>
<protein>
    <recommendedName>
        <fullName evidence="1">Phospho-N-acetylmuramoyl-pentapeptide-transferase</fullName>
        <ecNumber evidence="1">2.7.8.13</ecNumber>
    </recommendedName>
    <alternativeName>
        <fullName evidence="1">UDP-MurNAc-pentapeptide phosphotransferase</fullName>
    </alternativeName>
</protein>
<proteinExistence type="inferred from homology"/>
<accession>Q17XN0</accession>
<sequence length="353" mass="39078">MLYSLLYGYFNINLFQYLTFRAGLGFFIAFFLTLFLMPKFILWAKAKKANQPISSFVPSHQNKKDTPTMGGIVFVFATIIASLLCASLGNPYVLLGIIVLVGFSFVGFRDDYTKINQQSNAGMSAKMKFGMLFVLSLVVSVLLSVKGLDTFLYAPFLKNPLFEMPTALAVGFWVLVFLSASNAVNLTDGLDGLASVPSIFTLLSLSIFVYVAGNAEFSKYLLYPKVIDVGELFVISLALIGSLFGFLWYNCNPASVFMGDSGSLALGGFIAYNAIVSHNEILLVLMGSIFVIETLSVILQVGSYKTRKKRLFLMAPIHHHFEQKGWAENKVIVRFWIISMLSNLVALLSLKVR</sequence>
<dbReference type="EC" id="2.7.8.13" evidence="1"/>
<dbReference type="EMBL" id="AM260522">
    <property type="protein sequence ID" value="CAJ99596.1"/>
    <property type="molecule type" value="Genomic_DNA"/>
</dbReference>
<dbReference type="RefSeq" id="WP_011577709.1">
    <property type="nucleotide sequence ID" value="NC_008229.1"/>
</dbReference>
<dbReference type="SMR" id="Q17XN0"/>
<dbReference type="STRING" id="382638.Hac_0812"/>
<dbReference type="GeneID" id="31758231"/>
<dbReference type="KEGG" id="hac:Hac_0812"/>
<dbReference type="eggNOG" id="COG0472">
    <property type="taxonomic scope" value="Bacteria"/>
</dbReference>
<dbReference type="HOGENOM" id="CLU_023982_0_0_7"/>
<dbReference type="OrthoDB" id="9805475at2"/>
<dbReference type="BioCyc" id="HACI382638:HAC_RS03495-MONOMER"/>
<dbReference type="UniPathway" id="UPA00219"/>
<dbReference type="Proteomes" id="UP000000775">
    <property type="component" value="Chromosome"/>
</dbReference>
<dbReference type="GO" id="GO:0005886">
    <property type="term" value="C:plasma membrane"/>
    <property type="evidence" value="ECO:0007669"/>
    <property type="project" value="UniProtKB-SubCell"/>
</dbReference>
<dbReference type="GO" id="GO:0046872">
    <property type="term" value="F:metal ion binding"/>
    <property type="evidence" value="ECO:0007669"/>
    <property type="project" value="UniProtKB-KW"/>
</dbReference>
<dbReference type="GO" id="GO:0008963">
    <property type="term" value="F:phospho-N-acetylmuramoyl-pentapeptide-transferase activity"/>
    <property type="evidence" value="ECO:0007669"/>
    <property type="project" value="UniProtKB-UniRule"/>
</dbReference>
<dbReference type="GO" id="GO:0051992">
    <property type="term" value="F:UDP-N-acetylmuramoyl-L-alanyl-D-glutamyl-meso-2,6-diaminopimelyl-D-alanyl-D-alanine:undecaprenyl-phosphate transferase activity"/>
    <property type="evidence" value="ECO:0007669"/>
    <property type="project" value="RHEA"/>
</dbReference>
<dbReference type="GO" id="GO:0051301">
    <property type="term" value="P:cell division"/>
    <property type="evidence" value="ECO:0007669"/>
    <property type="project" value="UniProtKB-KW"/>
</dbReference>
<dbReference type="GO" id="GO:0071555">
    <property type="term" value="P:cell wall organization"/>
    <property type="evidence" value="ECO:0007669"/>
    <property type="project" value="UniProtKB-KW"/>
</dbReference>
<dbReference type="GO" id="GO:0009252">
    <property type="term" value="P:peptidoglycan biosynthetic process"/>
    <property type="evidence" value="ECO:0007669"/>
    <property type="project" value="UniProtKB-UniRule"/>
</dbReference>
<dbReference type="GO" id="GO:0008360">
    <property type="term" value="P:regulation of cell shape"/>
    <property type="evidence" value="ECO:0007669"/>
    <property type="project" value="UniProtKB-KW"/>
</dbReference>
<dbReference type="CDD" id="cd06852">
    <property type="entry name" value="GT_MraY"/>
    <property type="match status" value="1"/>
</dbReference>
<dbReference type="HAMAP" id="MF_00038">
    <property type="entry name" value="MraY"/>
    <property type="match status" value="1"/>
</dbReference>
<dbReference type="InterPro" id="IPR000715">
    <property type="entry name" value="Glycosyl_transferase_4"/>
</dbReference>
<dbReference type="InterPro" id="IPR003524">
    <property type="entry name" value="PNAcMuramoyl-5peptid_Trfase"/>
</dbReference>
<dbReference type="InterPro" id="IPR018480">
    <property type="entry name" value="PNAcMuramoyl-5peptid_Trfase_CS"/>
</dbReference>
<dbReference type="NCBIfam" id="TIGR00445">
    <property type="entry name" value="mraY"/>
    <property type="match status" value="1"/>
</dbReference>
<dbReference type="PANTHER" id="PTHR22926">
    <property type="entry name" value="PHOSPHO-N-ACETYLMURAMOYL-PENTAPEPTIDE-TRANSFERASE"/>
    <property type="match status" value="1"/>
</dbReference>
<dbReference type="PANTHER" id="PTHR22926:SF5">
    <property type="entry name" value="PHOSPHO-N-ACETYLMURAMOYL-PENTAPEPTIDE-TRANSFERASE HOMOLOG"/>
    <property type="match status" value="1"/>
</dbReference>
<dbReference type="Pfam" id="PF00953">
    <property type="entry name" value="Glycos_transf_4"/>
    <property type="match status" value="1"/>
</dbReference>
<dbReference type="Pfam" id="PF10555">
    <property type="entry name" value="MraY_sig1"/>
    <property type="match status" value="1"/>
</dbReference>
<dbReference type="PROSITE" id="PS01347">
    <property type="entry name" value="MRAY_1"/>
    <property type="match status" value="1"/>
</dbReference>
<dbReference type="PROSITE" id="PS01348">
    <property type="entry name" value="MRAY_2"/>
    <property type="match status" value="1"/>
</dbReference>
<reference key="1">
    <citation type="journal article" date="2006" name="PLoS Genet.">
        <title>Who ate whom? Adaptive Helicobacter genomic changes that accompanied a host jump from early humans to large felines.</title>
        <authorList>
            <person name="Eppinger M."/>
            <person name="Baar C."/>
            <person name="Linz B."/>
            <person name="Raddatz G."/>
            <person name="Lanz C."/>
            <person name="Keller H."/>
            <person name="Morelli G."/>
            <person name="Gressmann H."/>
            <person name="Achtman M."/>
            <person name="Schuster S.C."/>
        </authorList>
    </citation>
    <scope>NUCLEOTIDE SEQUENCE [LARGE SCALE GENOMIC DNA]</scope>
    <source>
        <strain>Sheeba</strain>
    </source>
</reference>
<comment type="function">
    <text evidence="1">Catalyzes the initial step of the lipid cycle reactions in the biosynthesis of the cell wall peptidoglycan: transfers peptidoglycan precursor phospho-MurNAc-pentapeptide from UDP-MurNAc-pentapeptide onto the lipid carrier undecaprenyl phosphate, yielding undecaprenyl-pyrophosphoryl-MurNAc-pentapeptide, known as lipid I.</text>
</comment>
<comment type="catalytic activity">
    <reaction evidence="1">
        <text>UDP-N-acetyl-alpha-D-muramoyl-L-alanyl-gamma-D-glutamyl-meso-2,6-diaminopimeloyl-D-alanyl-D-alanine + di-trans,octa-cis-undecaprenyl phosphate = di-trans,octa-cis-undecaprenyl diphospho-N-acetyl-alpha-D-muramoyl-L-alanyl-D-glutamyl-meso-2,6-diaminopimeloyl-D-alanyl-D-alanine + UMP</text>
        <dbReference type="Rhea" id="RHEA:28386"/>
        <dbReference type="ChEBI" id="CHEBI:57865"/>
        <dbReference type="ChEBI" id="CHEBI:60392"/>
        <dbReference type="ChEBI" id="CHEBI:61386"/>
        <dbReference type="ChEBI" id="CHEBI:61387"/>
        <dbReference type="EC" id="2.7.8.13"/>
    </reaction>
</comment>
<comment type="cofactor">
    <cofactor evidence="1">
        <name>Mg(2+)</name>
        <dbReference type="ChEBI" id="CHEBI:18420"/>
    </cofactor>
</comment>
<comment type="pathway">
    <text evidence="1">Cell wall biogenesis; peptidoglycan biosynthesis.</text>
</comment>
<comment type="subcellular location">
    <subcellularLocation>
        <location evidence="1">Cell inner membrane</location>
        <topology evidence="1">Multi-pass membrane protein</topology>
    </subcellularLocation>
</comment>
<comment type="similarity">
    <text evidence="1">Belongs to the glycosyltransferase 4 family. MraY subfamily.</text>
</comment>